<reference key="1">
    <citation type="submission" date="2006-03" db="EMBL/GenBank/DDBJ databases">
        <title>Complete sequence of chromosome of Nitrobacter hamburgensis X14.</title>
        <authorList>
            <consortium name="US DOE Joint Genome Institute"/>
            <person name="Copeland A."/>
            <person name="Lucas S."/>
            <person name="Lapidus A."/>
            <person name="Barry K."/>
            <person name="Detter J.C."/>
            <person name="Glavina del Rio T."/>
            <person name="Hammon N."/>
            <person name="Israni S."/>
            <person name="Dalin E."/>
            <person name="Tice H."/>
            <person name="Pitluck S."/>
            <person name="Chain P."/>
            <person name="Malfatti S."/>
            <person name="Shin M."/>
            <person name="Vergez L."/>
            <person name="Schmutz J."/>
            <person name="Larimer F."/>
            <person name="Land M."/>
            <person name="Hauser L."/>
            <person name="Kyrpides N."/>
            <person name="Ivanova N."/>
            <person name="Ward B."/>
            <person name="Arp D."/>
            <person name="Klotz M."/>
            <person name="Stein L."/>
            <person name="O'Mullan G."/>
            <person name="Starkenburg S."/>
            <person name="Sayavedra L."/>
            <person name="Poret-Peterson A.T."/>
            <person name="Gentry M.E."/>
            <person name="Bruce D."/>
            <person name="Richardson P."/>
        </authorList>
    </citation>
    <scope>NUCLEOTIDE SEQUENCE [LARGE SCALE GENOMIC DNA]</scope>
    <source>
        <strain>DSM 10229 / NCIMB 13809 / X14</strain>
    </source>
</reference>
<evidence type="ECO:0000255" key="1">
    <source>
        <dbReference type="HAMAP-Rule" id="MF_01031"/>
    </source>
</evidence>
<comment type="function">
    <text evidence="1">Catalyzes the isomerization between 2-isopropylmalate and 3-isopropylmalate, via the formation of 2-isopropylmaleate.</text>
</comment>
<comment type="catalytic activity">
    <reaction evidence="1">
        <text>(2R,3S)-3-isopropylmalate = (2S)-2-isopropylmalate</text>
        <dbReference type="Rhea" id="RHEA:32287"/>
        <dbReference type="ChEBI" id="CHEBI:1178"/>
        <dbReference type="ChEBI" id="CHEBI:35121"/>
        <dbReference type="EC" id="4.2.1.33"/>
    </reaction>
</comment>
<comment type="pathway">
    <text evidence="1">Amino-acid biosynthesis; L-leucine biosynthesis; L-leucine from 3-methyl-2-oxobutanoate: step 2/4.</text>
</comment>
<comment type="subunit">
    <text evidence="1">Heterodimer of LeuC and LeuD.</text>
</comment>
<comment type="similarity">
    <text evidence="1">Belongs to the LeuD family. LeuD type 1 subfamily.</text>
</comment>
<sequence>MDKFTTLEGVAAPLKIINVDTDMIIPKQYLKTIKRTGLGKGLFSEQRYRDDGSENPDFILNKPAYRNAKVLVAGDNFGCGSSREHAPWALLDFGIRCVISTSFGDIFYNNCFKNGILPIRVTQADLDKLFDDAERGANATLTIDLANQEIRGPDGGKATFEIDPFRKHCLLNGLDDIGLTMEKKSAIDSYEDKARRERAWA</sequence>
<organism>
    <name type="scientific">Nitrobacter hamburgensis (strain DSM 10229 / NCIMB 13809 / X14)</name>
    <dbReference type="NCBI Taxonomy" id="323097"/>
    <lineage>
        <taxon>Bacteria</taxon>
        <taxon>Pseudomonadati</taxon>
        <taxon>Pseudomonadota</taxon>
        <taxon>Alphaproteobacteria</taxon>
        <taxon>Hyphomicrobiales</taxon>
        <taxon>Nitrobacteraceae</taxon>
        <taxon>Nitrobacter</taxon>
    </lineage>
</organism>
<proteinExistence type="inferred from homology"/>
<accession>Q1QHH8</accession>
<protein>
    <recommendedName>
        <fullName evidence="1">3-isopropylmalate dehydratase small subunit</fullName>
        <ecNumber evidence="1">4.2.1.33</ecNumber>
    </recommendedName>
    <alternativeName>
        <fullName evidence="1">Alpha-IPM isomerase</fullName>
        <shortName evidence="1">IPMI</shortName>
    </alternativeName>
    <alternativeName>
        <fullName evidence="1">Isopropylmalate isomerase</fullName>
    </alternativeName>
</protein>
<gene>
    <name evidence="1" type="primary">leuD</name>
    <name type="ordered locus">Nham_3591</name>
</gene>
<name>LEUD_NITHX</name>
<dbReference type="EC" id="4.2.1.33" evidence="1"/>
<dbReference type="EMBL" id="CP000319">
    <property type="protein sequence ID" value="ABE64319.1"/>
    <property type="molecule type" value="Genomic_DNA"/>
</dbReference>
<dbReference type="RefSeq" id="WP_011511960.1">
    <property type="nucleotide sequence ID" value="NC_007964.1"/>
</dbReference>
<dbReference type="SMR" id="Q1QHH8"/>
<dbReference type="STRING" id="323097.Nham_3591"/>
<dbReference type="KEGG" id="nha:Nham_3591"/>
<dbReference type="eggNOG" id="COG0066">
    <property type="taxonomic scope" value="Bacteria"/>
</dbReference>
<dbReference type="HOGENOM" id="CLU_081378_0_3_5"/>
<dbReference type="OrthoDB" id="9777465at2"/>
<dbReference type="UniPathway" id="UPA00048">
    <property type="reaction ID" value="UER00071"/>
</dbReference>
<dbReference type="Proteomes" id="UP000001953">
    <property type="component" value="Chromosome"/>
</dbReference>
<dbReference type="GO" id="GO:0009316">
    <property type="term" value="C:3-isopropylmalate dehydratase complex"/>
    <property type="evidence" value="ECO:0007669"/>
    <property type="project" value="InterPro"/>
</dbReference>
<dbReference type="GO" id="GO:0003861">
    <property type="term" value="F:3-isopropylmalate dehydratase activity"/>
    <property type="evidence" value="ECO:0007669"/>
    <property type="project" value="UniProtKB-UniRule"/>
</dbReference>
<dbReference type="GO" id="GO:0009098">
    <property type="term" value="P:L-leucine biosynthetic process"/>
    <property type="evidence" value="ECO:0007669"/>
    <property type="project" value="UniProtKB-UniRule"/>
</dbReference>
<dbReference type="CDD" id="cd01577">
    <property type="entry name" value="IPMI_Swivel"/>
    <property type="match status" value="1"/>
</dbReference>
<dbReference type="FunFam" id="3.20.19.10:FF:000003">
    <property type="entry name" value="3-isopropylmalate dehydratase small subunit"/>
    <property type="match status" value="1"/>
</dbReference>
<dbReference type="Gene3D" id="3.20.19.10">
    <property type="entry name" value="Aconitase, domain 4"/>
    <property type="match status" value="1"/>
</dbReference>
<dbReference type="HAMAP" id="MF_01031">
    <property type="entry name" value="LeuD_type1"/>
    <property type="match status" value="1"/>
</dbReference>
<dbReference type="InterPro" id="IPR004431">
    <property type="entry name" value="3-IsopropMal_deHydase_ssu"/>
</dbReference>
<dbReference type="InterPro" id="IPR015928">
    <property type="entry name" value="Aconitase/3IPM_dehydase_swvl"/>
</dbReference>
<dbReference type="InterPro" id="IPR000573">
    <property type="entry name" value="AconitaseA/IPMdHydase_ssu_swvl"/>
</dbReference>
<dbReference type="InterPro" id="IPR033940">
    <property type="entry name" value="IPMI_Swivel"/>
</dbReference>
<dbReference type="InterPro" id="IPR050075">
    <property type="entry name" value="LeuD"/>
</dbReference>
<dbReference type="NCBIfam" id="TIGR00171">
    <property type="entry name" value="leuD"/>
    <property type="match status" value="1"/>
</dbReference>
<dbReference type="NCBIfam" id="NF002458">
    <property type="entry name" value="PRK01641.1"/>
    <property type="match status" value="1"/>
</dbReference>
<dbReference type="PANTHER" id="PTHR43345:SF5">
    <property type="entry name" value="3-ISOPROPYLMALATE DEHYDRATASE SMALL SUBUNIT"/>
    <property type="match status" value="1"/>
</dbReference>
<dbReference type="PANTHER" id="PTHR43345">
    <property type="entry name" value="3-ISOPROPYLMALATE DEHYDRATASE SMALL SUBUNIT 2-RELATED-RELATED"/>
    <property type="match status" value="1"/>
</dbReference>
<dbReference type="Pfam" id="PF00694">
    <property type="entry name" value="Aconitase_C"/>
    <property type="match status" value="1"/>
</dbReference>
<dbReference type="SUPFAM" id="SSF52016">
    <property type="entry name" value="LeuD/IlvD-like"/>
    <property type="match status" value="1"/>
</dbReference>
<feature type="chain" id="PRO_1000063797" description="3-isopropylmalate dehydratase small subunit">
    <location>
        <begin position="1"/>
        <end position="201"/>
    </location>
</feature>
<keyword id="KW-0028">Amino-acid biosynthesis</keyword>
<keyword id="KW-0100">Branched-chain amino acid biosynthesis</keyword>
<keyword id="KW-0432">Leucine biosynthesis</keyword>
<keyword id="KW-0456">Lyase</keyword>
<keyword id="KW-1185">Reference proteome</keyword>